<sequence>MESIEQQLTELRTTLRHHEYLYHVMDAPEIPDAEYDRLMRELRELETKHPELITPDSPTQRVGAAPLAAFSQIRHEVPMLSLDNVFDEESFLAFNKRVQDRLKSNEKVTWCCELKLDGLAVSILYENGVLVSAATRGDGTTGEDITSNVRTIRAIPLKLHGENIPARLEVRGEVFLPQAGFEKINEDARRTGGKVFANPRNAAAGSLRQLDPRITAKRPLTFFCYGVGVLEGGELPDTHLGRLMQFKAWGLPVSDRVTLCESAEEVLAFYHKVEEDRPTLGFDIDGVVIKVNSLAQQEQLGFVARAPRWAVAFKFPAQEQMTFVRDVEFQVGRTGAITPVARLEPVHVAGVLVSNATLHNADEIERLGLRIGDKVVIRRAGDVIPQVVNVVLSERPEDTREVVFPTHCPVCGSDVERVEGEAVARCTGGLICGAQRKESLKHFVSRRAMDVDGMGDKIIDQLVEKEYVHTPADLFKLTAGKLTGLERMGPKSAQNVVNALEKAKETTFARFLYALGVREVGEATAAGLAAYFGTLEALEAASIEELQKVPDVGIVVASHVHNFFAEESNRNVISELLAEGVHWPEPIVINAEEIDSPFAGKTVVLTGSLSQMSRDDAKARLVELGAKVAGSVSKKTDLVIAGEAAGSKLAKAQELGIEVIDETEMLRLLGS</sequence>
<accession>B7MHR5</accession>
<organism>
    <name type="scientific">Escherichia coli O45:K1 (strain S88 / ExPEC)</name>
    <dbReference type="NCBI Taxonomy" id="585035"/>
    <lineage>
        <taxon>Bacteria</taxon>
        <taxon>Pseudomonadati</taxon>
        <taxon>Pseudomonadota</taxon>
        <taxon>Gammaproteobacteria</taxon>
        <taxon>Enterobacterales</taxon>
        <taxon>Enterobacteriaceae</taxon>
        <taxon>Escherichia</taxon>
    </lineage>
</organism>
<evidence type="ECO:0000255" key="1">
    <source>
        <dbReference type="HAMAP-Rule" id="MF_01588"/>
    </source>
</evidence>
<reference key="1">
    <citation type="journal article" date="2009" name="PLoS Genet.">
        <title>Organised genome dynamics in the Escherichia coli species results in highly diverse adaptive paths.</title>
        <authorList>
            <person name="Touchon M."/>
            <person name="Hoede C."/>
            <person name="Tenaillon O."/>
            <person name="Barbe V."/>
            <person name="Baeriswyl S."/>
            <person name="Bidet P."/>
            <person name="Bingen E."/>
            <person name="Bonacorsi S."/>
            <person name="Bouchier C."/>
            <person name="Bouvet O."/>
            <person name="Calteau A."/>
            <person name="Chiapello H."/>
            <person name="Clermont O."/>
            <person name="Cruveiller S."/>
            <person name="Danchin A."/>
            <person name="Diard M."/>
            <person name="Dossat C."/>
            <person name="Karoui M.E."/>
            <person name="Frapy E."/>
            <person name="Garry L."/>
            <person name="Ghigo J.M."/>
            <person name="Gilles A.M."/>
            <person name="Johnson J."/>
            <person name="Le Bouguenec C."/>
            <person name="Lescat M."/>
            <person name="Mangenot S."/>
            <person name="Martinez-Jehanne V."/>
            <person name="Matic I."/>
            <person name="Nassif X."/>
            <person name="Oztas S."/>
            <person name="Petit M.A."/>
            <person name="Pichon C."/>
            <person name="Rouy Z."/>
            <person name="Ruf C.S."/>
            <person name="Schneider D."/>
            <person name="Tourret J."/>
            <person name="Vacherie B."/>
            <person name="Vallenet D."/>
            <person name="Medigue C."/>
            <person name="Rocha E.P.C."/>
            <person name="Denamur E."/>
        </authorList>
    </citation>
    <scope>NUCLEOTIDE SEQUENCE [LARGE SCALE GENOMIC DNA]</scope>
    <source>
        <strain>S88 / ExPEC</strain>
    </source>
</reference>
<keyword id="KW-0227">DNA damage</keyword>
<keyword id="KW-0234">DNA repair</keyword>
<keyword id="KW-0235">DNA replication</keyword>
<keyword id="KW-0436">Ligase</keyword>
<keyword id="KW-0460">Magnesium</keyword>
<keyword id="KW-0464">Manganese</keyword>
<keyword id="KW-0479">Metal-binding</keyword>
<keyword id="KW-0520">NAD</keyword>
<keyword id="KW-1185">Reference proteome</keyword>
<keyword id="KW-0862">Zinc</keyword>
<proteinExistence type="inferred from homology"/>
<gene>
    <name evidence="1" type="primary">ligA</name>
    <name type="ordered locus">ECS88_2601</name>
</gene>
<comment type="function">
    <text evidence="1">DNA ligase that catalyzes the formation of phosphodiester linkages between 5'-phosphoryl and 3'-hydroxyl groups in double-stranded DNA using NAD as a coenzyme and as the energy source for the reaction. It is essential for DNA replication and repair of damaged DNA.</text>
</comment>
<comment type="catalytic activity">
    <reaction evidence="1">
        <text>NAD(+) + (deoxyribonucleotide)n-3'-hydroxyl + 5'-phospho-(deoxyribonucleotide)m = (deoxyribonucleotide)n+m + AMP + beta-nicotinamide D-nucleotide.</text>
        <dbReference type="EC" id="6.5.1.2"/>
    </reaction>
</comment>
<comment type="cofactor">
    <cofactor evidence="1">
        <name>Mg(2+)</name>
        <dbReference type="ChEBI" id="CHEBI:18420"/>
    </cofactor>
    <cofactor evidence="1">
        <name>Mn(2+)</name>
        <dbReference type="ChEBI" id="CHEBI:29035"/>
    </cofactor>
</comment>
<comment type="similarity">
    <text evidence="1">Belongs to the NAD-dependent DNA ligase family. LigA subfamily.</text>
</comment>
<name>DNLJ_ECO45</name>
<protein>
    <recommendedName>
        <fullName evidence="1">DNA ligase</fullName>
        <ecNumber evidence="1">6.5.1.2</ecNumber>
    </recommendedName>
    <alternativeName>
        <fullName evidence="1">Polydeoxyribonucleotide synthase [NAD(+)]</fullName>
    </alternativeName>
</protein>
<feature type="chain" id="PRO_0000380369" description="DNA ligase">
    <location>
        <begin position="1"/>
        <end position="671"/>
    </location>
</feature>
<feature type="domain" description="BRCT" evidence="1">
    <location>
        <begin position="593"/>
        <end position="671"/>
    </location>
</feature>
<feature type="active site" description="N6-AMP-lysine intermediate" evidence="1">
    <location>
        <position position="115"/>
    </location>
</feature>
<feature type="binding site" evidence="1">
    <location>
        <begin position="32"/>
        <end position="36"/>
    </location>
    <ligand>
        <name>NAD(+)</name>
        <dbReference type="ChEBI" id="CHEBI:57540"/>
    </ligand>
</feature>
<feature type="binding site" evidence="1">
    <location>
        <begin position="81"/>
        <end position="82"/>
    </location>
    <ligand>
        <name>NAD(+)</name>
        <dbReference type="ChEBI" id="CHEBI:57540"/>
    </ligand>
</feature>
<feature type="binding site" evidence="1">
    <location>
        <position position="113"/>
    </location>
    <ligand>
        <name>NAD(+)</name>
        <dbReference type="ChEBI" id="CHEBI:57540"/>
    </ligand>
</feature>
<feature type="binding site" evidence="1">
    <location>
        <position position="136"/>
    </location>
    <ligand>
        <name>NAD(+)</name>
        <dbReference type="ChEBI" id="CHEBI:57540"/>
    </ligand>
</feature>
<feature type="binding site" evidence="1">
    <location>
        <position position="173"/>
    </location>
    <ligand>
        <name>NAD(+)</name>
        <dbReference type="ChEBI" id="CHEBI:57540"/>
    </ligand>
</feature>
<feature type="binding site" evidence="1">
    <location>
        <position position="290"/>
    </location>
    <ligand>
        <name>NAD(+)</name>
        <dbReference type="ChEBI" id="CHEBI:57540"/>
    </ligand>
</feature>
<feature type="binding site" evidence="1">
    <location>
        <position position="314"/>
    </location>
    <ligand>
        <name>NAD(+)</name>
        <dbReference type="ChEBI" id="CHEBI:57540"/>
    </ligand>
</feature>
<feature type="binding site" evidence="1">
    <location>
        <position position="408"/>
    </location>
    <ligand>
        <name>Zn(2+)</name>
        <dbReference type="ChEBI" id="CHEBI:29105"/>
    </ligand>
</feature>
<feature type="binding site" evidence="1">
    <location>
        <position position="411"/>
    </location>
    <ligand>
        <name>Zn(2+)</name>
        <dbReference type="ChEBI" id="CHEBI:29105"/>
    </ligand>
</feature>
<feature type="binding site" evidence="1">
    <location>
        <position position="426"/>
    </location>
    <ligand>
        <name>Zn(2+)</name>
        <dbReference type="ChEBI" id="CHEBI:29105"/>
    </ligand>
</feature>
<feature type="binding site" evidence="1">
    <location>
        <position position="432"/>
    </location>
    <ligand>
        <name>Zn(2+)</name>
        <dbReference type="ChEBI" id="CHEBI:29105"/>
    </ligand>
</feature>
<dbReference type="EC" id="6.5.1.2" evidence="1"/>
<dbReference type="EMBL" id="CU928161">
    <property type="protein sequence ID" value="CAR03873.1"/>
    <property type="molecule type" value="Genomic_DNA"/>
</dbReference>
<dbReference type="RefSeq" id="WP_000443708.1">
    <property type="nucleotide sequence ID" value="NC_011742.1"/>
</dbReference>
<dbReference type="SMR" id="B7MHR5"/>
<dbReference type="KEGG" id="ecz:ECS88_2601"/>
<dbReference type="HOGENOM" id="CLU_007764_2_1_6"/>
<dbReference type="Proteomes" id="UP000000747">
    <property type="component" value="Chromosome"/>
</dbReference>
<dbReference type="GO" id="GO:0005829">
    <property type="term" value="C:cytosol"/>
    <property type="evidence" value="ECO:0007669"/>
    <property type="project" value="TreeGrafter"/>
</dbReference>
<dbReference type="GO" id="GO:0003677">
    <property type="term" value="F:DNA binding"/>
    <property type="evidence" value="ECO:0007669"/>
    <property type="project" value="InterPro"/>
</dbReference>
<dbReference type="GO" id="GO:0003911">
    <property type="term" value="F:DNA ligase (NAD+) activity"/>
    <property type="evidence" value="ECO:0007669"/>
    <property type="project" value="UniProtKB-UniRule"/>
</dbReference>
<dbReference type="GO" id="GO:0046872">
    <property type="term" value="F:metal ion binding"/>
    <property type="evidence" value="ECO:0007669"/>
    <property type="project" value="UniProtKB-KW"/>
</dbReference>
<dbReference type="GO" id="GO:0006281">
    <property type="term" value="P:DNA repair"/>
    <property type="evidence" value="ECO:0007669"/>
    <property type="project" value="UniProtKB-KW"/>
</dbReference>
<dbReference type="GO" id="GO:0006260">
    <property type="term" value="P:DNA replication"/>
    <property type="evidence" value="ECO:0007669"/>
    <property type="project" value="UniProtKB-KW"/>
</dbReference>
<dbReference type="CDD" id="cd17748">
    <property type="entry name" value="BRCT_DNA_ligase_like"/>
    <property type="match status" value="1"/>
</dbReference>
<dbReference type="CDD" id="cd00114">
    <property type="entry name" value="LIGANc"/>
    <property type="match status" value="1"/>
</dbReference>
<dbReference type="FunFam" id="1.10.150.20:FF:000006">
    <property type="entry name" value="DNA ligase"/>
    <property type="match status" value="1"/>
</dbReference>
<dbReference type="FunFam" id="1.10.150.20:FF:000007">
    <property type="entry name" value="DNA ligase"/>
    <property type="match status" value="1"/>
</dbReference>
<dbReference type="FunFam" id="1.10.287.610:FF:000002">
    <property type="entry name" value="DNA ligase"/>
    <property type="match status" value="1"/>
</dbReference>
<dbReference type="FunFam" id="2.40.50.140:FF:000012">
    <property type="entry name" value="DNA ligase"/>
    <property type="match status" value="1"/>
</dbReference>
<dbReference type="FunFam" id="3.30.470.30:FF:000001">
    <property type="entry name" value="DNA ligase"/>
    <property type="match status" value="1"/>
</dbReference>
<dbReference type="FunFam" id="3.40.50.10190:FF:000004">
    <property type="entry name" value="DNA ligase"/>
    <property type="match status" value="1"/>
</dbReference>
<dbReference type="FunFam" id="6.20.10.30:FF:000001">
    <property type="entry name" value="DNA ligase"/>
    <property type="match status" value="1"/>
</dbReference>
<dbReference type="Gene3D" id="6.20.10.30">
    <property type="match status" value="1"/>
</dbReference>
<dbReference type="Gene3D" id="1.10.150.20">
    <property type="entry name" value="5' to 3' exonuclease, C-terminal subdomain"/>
    <property type="match status" value="2"/>
</dbReference>
<dbReference type="Gene3D" id="3.40.50.10190">
    <property type="entry name" value="BRCT domain"/>
    <property type="match status" value="1"/>
</dbReference>
<dbReference type="Gene3D" id="3.30.470.30">
    <property type="entry name" value="DNA ligase/mRNA capping enzyme"/>
    <property type="match status" value="1"/>
</dbReference>
<dbReference type="Gene3D" id="1.10.287.610">
    <property type="entry name" value="Helix hairpin bin"/>
    <property type="match status" value="1"/>
</dbReference>
<dbReference type="Gene3D" id="2.40.50.140">
    <property type="entry name" value="Nucleic acid-binding proteins"/>
    <property type="match status" value="1"/>
</dbReference>
<dbReference type="HAMAP" id="MF_01588">
    <property type="entry name" value="DNA_ligase_A"/>
    <property type="match status" value="1"/>
</dbReference>
<dbReference type="InterPro" id="IPR001357">
    <property type="entry name" value="BRCT_dom"/>
</dbReference>
<dbReference type="InterPro" id="IPR036420">
    <property type="entry name" value="BRCT_dom_sf"/>
</dbReference>
<dbReference type="InterPro" id="IPR041663">
    <property type="entry name" value="DisA/LigA_HHH"/>
</dbReference>
<dbReference type="InterPro" id="IPR001679">
    <property type="entry name" value="DNA_ligase"/>
</dbReference>
<dbReference type="InterPro" id="IPR018239">
    <property type="entry name" value="DNA_ligase_AS"/>
</dbReference>
<dbReference type="InterPro" id="IPR033136">
    <property type="entry name" value="DNA_ligase_CS"/>
</dbReference>
<dbReference type="InterPro" id="IPR013839">
    <property type="entry name" value="DNAligase_adenylation"/>
</dbReference>
<dbReference type="InterPro" id="IPR013840">
    <property type="entry name" value="DNAligase_N"/>
</dbReference>
<dbReference type="InterPro" id="IPR003583">
    <property type="entry name" value="Hlx-hairpin-Hlx_DNA-bd_motif"/>
</dbReference>
<dbReference type="InterPro" id="IPR012340">
    <property type="entry name" value="NA-bd_OB-fold"/>
</dbReference>
<dbReference type="InterPro" id="IPR004150">
    <property type="entry name" value="NAD_DNA_ligase_OB"/>
</dbReference>
<dbReference type="InterPro" id="IPR010994">
    <property type="entry name" value="RuvA_2-like"/>
</dbReference>
<dbReference type="InterPro" id="IPR004149">
    <property type="entry name" value="Znf_DNAligase_C4"/>
</dbReference>
<dbReference type="NCBIfam" id="TIGR00575">
    <property type="entry name" value="dnlj"/>
    <property type="match status" value="1"/>
</dbReference>
<dbReference type="NCBIfam" id="NF005932">
    <property type="entry name" value="PRK07956.1"/>
    <property type="match status" value="1"/>
</dbReference>
<dbReference type="PANTHER" id="PTHR23389">
    <property type="entry name" value="CHROMOSOME TRANSMISSION FIDELITY FACTOR 18"/>
    <property type="match status" value="1"/>
</dbReference>
<dbReference type="PANTHER" id="PTHR23389:SF9">
    <property type="entry name" value="DNA LIGASE"/>
    <property type="match status" value="1"/>
</dbReference>
<dbReference type="Pfam" id="PF00533">
    <property type="entry name" value="BRCT"/>
    <property type="match status" value="1"/>
</dbReference>
<dbReference type="Pfam" id="PF01653">
    <property type="entry name" value="DNA_ligase_aden"/>
    <property type="match status" value="1"/>
</dbReference>
<dbReference type="Pfam" id="PF03120">
    <property type="entry name" value="DNA_ligase_OB"/>
    <property type="match status" value="1"/>
</dbReference>
<dbReference type="Pfam" id="PF03119">
    <property type="entry name" value="DNA_ligase_ZBD"/>
    <property type="match status" value="1"/>
</dbReference>
<dbReference type="Pfam" id="PF12826">
    <property type="entry name" value="HHH_2"/>
    <property type="match status" value="1"/>
</dbReference>
<dbReference type="Pfam" id="PF14520">
    <property type="entry name" value="HHH_5"/>
    <property type="match status" value="1"/>
</dbReference>
<dbReference type="Pfam" id="PF22745">
    <property type="entry name" value="Nlig-Ia"/>
    <property type="match status" value="1"/>
</dbReference>
<dbReference type="PIRSF" id="PIRSF001604">
    <property type="entry name" value="LigA"/>
    <property type="match status" value="1"/>
</dbReference>
<dbReference type="SMART" id="SM00292">
    <property type="entry name" value="BRCT"/>
    <property type="match status" value="1"/>
</dbReference>
<dbReference type="SMART" id="SM00278">
    <property type="entry name" value="HhH1"/>
    <property type="match status" value="4"/>
</dbReference>
<dbReference type="SMART" id="SM00532">
    <property type="entry name" value="LIGANc"/>
    <property type="match status" value="1"/>
</dbReference>
<dbReference type="SUPFAM" id="SSF52113">
    <property type="entry name" value="BRCT domain"/>
    <property type="match status" value="1"/>
</dbReference>
<dbReference type="SUPFAM" id="SSF56091">
    <property type="entry name" value="DNA ligase/mRNA capping enzyme, catalytic domain"/>
    <property type="match status" value="1"/>
</dbReference>
<dbReference type="SUPFAM" id="SSF50249">
    <property type="entry name" value="Nucleic acid-binding proteins"/>
    <property type="match status" value="1"/>
</dbReference>
<dbReference type="SUPFAM" id="SSF47781">
    <property type="entry name" value="RuvA domain 2-like"/>
    <property type="match status" value="1"/>
</dbReference>
<dbReference type="PROSITE" id="PS50172">
    <property type="entry name" value="BRCT"/>
    <property type="match status" value="1"/>
</dbReference>
<dbReference type="PROSITE" id="PS01055">
    <property type="entry name" value="DNA_LIGASE_N1"/>
    <property type="match status" value="1"/>
</dbReference>
<dbReference type="PROSITE" id="PS01056">
    <property type="entry name" value="DNA_LIGASE_N2"/>
    <property type="match status" value="1"/>
</dbReference>